<dbReference type="EC" id="2.2.1.7" evidence="1"/>
<dbReference type="EMBL" id="AE016877">
    <property type="protein sequence ID" value="AAP11091.1"/>
    <property type="molecule type" value="Genomic_DNA"/>
</dbReference>
<dbReference type="RefSeq" id="NP_833890.1">
    <property type="nucleotide sequence ID" value="NC_004722.1"/>
</dbReference>
<dbReference type="RefSeq" id="WP_000366452.1">
    <property type="nucleotide sequence ID" value="NZ_CP138336.1"/>
</dbReference>
<dbReference type="SMR" id="Q818R9"/>
<dbReference type="STRING" id="226900.BC_4176"/>
<dbReference type="GeneID" id="72450860"/>
<dbReference type="KEGG" id="bce:BC4176"/>
<dbReference type="PATRIC" id="fig|226900.8.peg.4316"/>
<dbReference type="HOGENOM" id="CLU_009227_1_4_9"/>
<dbReference type="OrthoDB" id="9803371at2"/>
<dbReference type="UniPathway" id="UPA00064">
    <property type="reaction ID" value="UER00091"/>
</dbReference>
<dbReference type="Proteomes" id="UP000001417">
    <property type="component" value="Chromosome"/>
</dbReference>
<dbReference type="GO" id="GO:0005829">
    <property type="term" value="C:cytosol"/>
    <property type="evidence" value="ECO:0000318"/>
    <property type="project" value="GO_Central"/>
</dbReference>
<dbReference type="GO" id="GO:0008661">
    <property type="term" value="F:1-deoxy-D-xylulose-5-phosphate synthase activity"/>
    <property type="evidence" value="ECO:0000318"/>
    <property type="project" value="GO_Central"/>
</dbReference>
<dbReference type="GO" id="GO:0000287">
    <property type="term" value="F:magnesium ion binding"/>
    <property type="evidence" value="ECO:0007669"/>
    <property type="project" value="UniProtKB-UniRule"/>
</dbReference>
<dbReference type="GO" id="GO:0030976">
    <property type="term" value="F:thiamine pyrophosphate binding"/>
    <property type="evidence" value="ECO:0007669"/>
    <property type="project" value="UniProtKB-UniRule"/>
</dbReference>
<dbReference type="GO" id="GO:0052865">
    <property type="term" value="P:1-deoxy-D-xylulose 5-phosphate biosynthetic process"/>
    <property type="evidence" value="ECO:0007669"/>
    <property type="project" value="UniProtKB-UniPathway"/>
</dbReference>
<dbReference type="GO" id="GO:0019288">
    <property type="term" value="P:isopentenyl diphosphate biosynthetic process, methylerythritol 4-phosphate pathway"/>
    <property type="evidence" value="ECO:0000318"/>
    <property type="project" value="GO_Central"/>
</dbReference>
<dbReference type="GO" id="GO:0016114">
    <property type="term" value="P:terpenoid biosynthetic process"/>
    <property type="evidence" value="ECO:0007669"/>
    <property type="project" value="UniProtKB-UniRule"/>
</dbReference>
<dbReference type="GO" id="GO:0009228">
    <property type="term" value="P:thiamine biosynthetic process"/>
    <property type="evidence" value="ECO:0007669"/>
    <property type="project" value="UniProtKB-UniRule"/>
</dbReference>
<dbReference type="CDD" id="cd02007">
    <property type="entry name" value="TPP_DXS"/>
    <property type="match status" value="1"/>
</dbReference>
<dbReference type="CDD" id="cd07033">
    <property type="entry name" value="TPP_PYR_DXS_TK_like"/>
    <property type="match status" value="1"/>
</dbReference>
<dbReference type="FunFam" id="3.40.50.920:FF:000002">
    <property type="entry name" value="1-deoxy-D-xylulose-5-phosphate synthase"/>
    <property type="match status" value="1"/>
</dbReference>
<dbReference type="FunFam" id="3.40.50.970:FF:000030">
    <property type="entry name" value="1-deoxy-D-xylulose-5-phosphate synthase"/>
    <property type="match status" value="1"/>
</dbReference>
<dbReference type="Gene3D" id="3.40.50.920">
    <property type="match status" value="1"/>
</dbReference>
<dbReference type="Gene3D" id="3.40.50.970">
    <property type="match status" value="2"/>
</dbReference>
<dbReference type="HAMAP" id="MF_00315">
    <property type="entry name" value="DXP_synth"/>
    <property type="match status" value="1"/>
</dbReference>
<dbReference type="InterPro" id="IPR005477">
    <property type="entry name" value="Dxylulose-5-P_synthase"/>
</dbReference>
<dbReference type="InterPro" id="IPR029061">
    <property type="entry name" value="THDP-binding"/>
</dbReference>
<dbReference type="InterPro" id="IPR009014">
    <property type="entry name" value="Transketo_C/PFOR_II"/>
</dbReference>
<dbReference type="InterPro" id="IPR005475">
    <property type="entry name" value="Transketolase-like_Pyr-bd"/>
</dbReference>
<dbReference type="InterPro" id="IPR020826">
    <property type="entry name" value="Transketolase_BS"/>
</dbReference>
<dbReference type="InterPro" id="IPR033248">
    <property type="entry name" value="Transketolase_C"/>
</dbReference>
<dbReference type="InterPro" id="IPR049557">
    <property type="entry name" value="Transketolase_CS"/>
</dbReference>
<dbReference type="NCBIfam" id="TIGR00204">
    <property type="entry name" value="dxs"/>
    <property type="match status" value="1"/>
</dbReference>
<dbReference type="NCBIfam" id="NF003933">
    <property type="entry name" value="PRK05444.2-2"/>
    <property type="match status" value="1"/>
</dbReference>
<dbReference type="PANTHER" id="PTHR43322">
    <property type="entry name" value="1-D-DEOXYXYLULOSE 5-PHOSPHATE SYNTHASE-RELATED"/>
    <property type="match status" value="1"/>
</dbReference>
<dbReference type="PANTHER" id="PTHR43322:SF5">
    <property type="entry name" value="1-DEOXY-D-XYLULOSE-5-PHOSPHATE SYNTHASE, CHLOROPLASTIC"/>
    <property type="match status" value="1"/>
</dbReference>
<dbReference type="Pfam" id="PF13292">
    <property type="entry name" value="DXP_synthase_N"/>
    <property type="match status" value="1"/>
</dbReference>
<dbReference type="Pfam" id="PF02779">
    <property type="entry name" value="Transket_pyr"/>
    <property type="match status" value="1"/>
</dbReference>
<dbReference type="Pfam" id="PF02780">
    <property type="entry name" value="Transketolase_C"/>
    <property type="match status" value="1"/>
</dbReference>
<dbReference type="SMART" id="SM00861">
    <property type="entry name" value="Transket_pyr"/>
    <property type="match status" value="1"/>
</dbReference>
<dbReference type="SUPFAM" id="SSF52518">
    <property type="entry name" value="Thiamin diphosphate-binding fold (THDP-binding)"/>
    <property type="match status" value="2"/>
</dbReference>
<dbReference type="SUPFAM" id="SSF52922">
    <property type="entry name" value="TK C-terminal domain-like"/>
    <property type="match status" value="1"/>
</dbReference>
<dbReference type="PROSITE" id="PS00801">
    <property type="entry name" value="TRANSKETOLASE_1"/>
    <property type="match status" value="1"/>
</dbReference>
<dbReference type="PROSITE" id="PS00802">
    <property type="entry name" value="TRANSKETOLASE_2"/>
    <property type="match status" value="1"/>
</dbReference>
<name>DXS_BACCR</name>
<organism>
    <name type="scientific">Bacillus cereus (strain ATCC 14579 / DSM 31 / CCUG 7414 / JCM 2152 / NBRC 15305 / NCIMB 9373 / NCTC 2599 / NRRL B-3711)</name>
    <dbReference type="NCBI Taxonomy" id="226900"/>
    <lineage>
        <taxon>Bacteria</taxon>
        <taxon>Bacillati</taxon>
        <taxon>Bacillota</taxon>
        <taxon>Bacilli</taxon>
        <taxon>Bacillales</taxon>
        <taxon>Bacillaceae</taxon>
        <taxon>Bacillus</taxon>
        <taxon>Bacillus cereus group</taxon>
    </lineage>
</organism>
<accession>Q818R9</accession>
<keyword id="KW-0414">Isoprene biosynthesis</keyword>
<keyword id="KW-0460">Magnesium</keyword>
<keyword id="KW-0479">Metal-binding</keyword>
<keyword id="KW-1185">Reference proteome</keyword>
<keyword id="KW-0784">Thiamine biosynthesis</keyword>
<keyword id="KW-0786">Thiamine pyrophosphate</keyword>
<keyword id="KW-0808">Transferase</keyword>
<proteinExistence type="inferred from homology"/>
<evidence type="ECO:0000255" key="1">
    <source>
        <dbReference type="HAMAP-Rule" id="MF_00315"/>
    </source>
</evidence>
<protein>
    <recommendedName>
        <fullName evidence="1">1-deoxy-D-xylulose-5-phosphate synthase</fullName>
        <ecNumber evidence="1">2.2.1.7</ecNumber>
    </recommendedName>
    <alternativeName>
        <fullName evidence="1">1-deoxyxylulose-5-phosphate synthase</fullName>
        <shortName evidence="1">DXP synthase</shortName>
        <shortName evidence="1">DXPS</shortName>
    </alternativeName>
</protein>
<comment type="function">
    <text evidence="1">Catalyzes the acyloin condensation reaction between C atoms 2 and 3 of pyruvate and glyceraldehyde 3-phosphate to yield 1-deoxy-D-xylulose-5-phosphate (DXP).</text>
</comment>
<comment type="catalytic activity">
    <reaction evidence="1">
        <text>D-glyceraldehyde 3-phosphate + pyruvate + H(+) = 1-deoxy-D-xylulose 5-phosphate + CO2</text>
        <dbReference type="Rhea" id="RHEA:12605"/>
        <dbReference type="ChEBI" id="CHEBI:15361"/>
        <dbReference type="ChEBI" id="CHEBI:15378"/>
        <dbReference type="ChEBI" id="CHEBI:16526"/>
        <dbReference type="ChEBI" id="CHEBI:57792"/>
        <dbReference type="ChEBI" id="CHEBI:59776"/>
        <dbReference type="EC" id="2.2.1.7"/>
    </reaction>
</comment>
<comment type="cofactor">
    <cofactor evidence="1">
        <name>Mg(2+)</name>
        <dbReference type="ChEBI" id="CHEBI:18420"/>
    </cofactor>
    <text evidence="1">Binds 1 Mg(2+) ion per subunit.</text>
</comment>
<comment type="cofactor">
    <cofactor evidence="1">
        <name>thiamine diphosphate</name>
        <dbReference type="ChEBI" id="CHEBI:58937"/>
    </cofactor>
    <text evidence="1">Binds 1 thiamine pyrophosphate per subunit.</text>
</comment>
<comment type="pathway">
    <text evidence="1">Metabolic intermediate biosynthesis; 1-deoxy-D-xylulose 5-phosphate biosynthesis; 1-deoxy-D-xylulose 5-phosphate from D-glyceraldehyde 3-phosphate and pyruvate: step 1/1.</text>
</comment>
<comment type="subunit">
    <text evidence="1">Homodimer.</text>
</comment>
<comment type="similarity">
    <text evidence="1">Belongs to the transketolase family. DXPS subfamily.</text>
</comment>
<reference key="1">
    <citation type="journal article" date="2003" name="Nature">
        <title>Genome sequence of Bacillus cereus and comparative analysis with Bacillus anthracis.</title>
        <authorList>
            <person name="Ivanova N."/>
            <person name="Sorokin A."/>
            <person name="Anderson I."/>
            <person name="Galleron N."/>
            <person name="Candelon B."/>
            <person name="Kapatral V."/>
            <person name="Bhattacharyya A."/>
            <person name="Reznik G."/>
            <person name="Mikhailova N."/>
            <person name="Lapidus A."/>
            <person name="Chu L."/>
            <person name="Mazur M."/>
            <person name="Goltsman E."/>
            <person name="Larsen N."/>
            <person name="D'Souza M."/>
            <person name="Walunas T."/>
            <person name="Grechkin Y."/>
            <person name="Pusch G."/>
            <person name="Haselkorn R."/>
            <person name="Fonstein M."/>
            <person name="Ehrlich S.D."/>
            <person name="Overbeek R."/>
            <person name="Kyrpides N.C."/>
        </authorList>
    </citation>
    <scope>NUCLEOTIDE SEQUENCE [LARGE SCALE GENOMIC DNA]</scope>
    <source>
        <strain>ATCC 14579 / DSM 31 / CCUG 7414 / JCM 2152 / NBRC 15305 / NCIMB 9373 / NCTC 2599 / NRRL B-3711</strain>
    </source>
</reference>
<sequence length="630" mass="69411">MDLTQIQNPSFLKDMSISELEGLSEDIRKFLIEELSQTGGHIAPNLGVVELTIALHKLFDSPQDKFLWDVGHQSYVHKILTGRAKEFGTLRQYQGLCGFPKRCESEHDVWETGHSSTSLSAAMGMALARDLKKTKEYVIPIIGDGALTGGMALEALNHIGHEKTDMIVILNDNEMSIAPNVGALHNVLGRLRTAGKYHWVKDELEYILKKIPAVGGKVAATAEKIKDSLKYLLVSGVFFEELGFTYLGPVDGHDYEKLFETLQYAKKTKGPVLVHVITKKGKGYKPAESDVIGTWHGTGPYKIESGDFVKPKEVAPAWSAVVSETVLKLARADERIVAITPAMPVGSKLEKFQKEFPDRMIDVGIAEQHATTMAAGMATQGMKPFLAIYSTFLQRAYDQVVHDICRQNLNVFIGIDRSGLVGADGETHQGVFDISFLRHLPNMVLMMPKDENEGQHLVYTAMQYEDGPIALRYARGNGLGVHMDEELKAIPIGTWETLKEGTQAAILTFGTTIPMAMEAAERLEKAGVSVKVVNARFIKPMDEAYLHDLLGKNIPILTIEEACLIGGFGTGVVEFASENGYHSALVERMGIPDRFIEHGSVTKLLEEIGLTTDAVVDRIHTMIPSKQKRA</sequence>
<gene>
    <name evidence="1" type="primary">dxs</name>
    <name type="ordered locus">BC_4176</name>
</gene>
<feature type="chain" id="PRO_0000189084" description="1-deoxy-D-xylulose-5-phosphate synthase">
    <location>
        <begin position="1"/>
        <end position="630"/>
    </location>
</feature>
<feature type="binding site" evidence="1">
    <location>
        <position position="72"/>
    </location>
    <ligand>
        <name>thiamine diphosphate</name>
        <dbReference type="ChEBI" id="CHEBI:58937"/>
    </ligand>
</feature>
<feature type="binding site" evidence="1">
    <location>
        <begin position="113"/>
        <end position="115"/>
    </location>
    <ligand>
        <name>thiamine diphosphate</name>
        <dbReference type="ChEBI" id="CHEBI:58937"/>
    </ligand>
</feature>
<feature type="binding site" evidence="1">
    <location>
        <position position="144"/>
    </location>
    <ligand>
        <name>Mg(2+)</name>
        <dbReference type="ChEBI" id="CHEBI:18420"/>
    </ligand>
</feature>
<feature type="binding site" evidence="1">
    <location>
        <begin position="145"/>
        <end position="146"/>
    </location>
    <ligand>
        <name>thiamine diphosphate</name>
        <dbReference type="ChEBI" id="CHEBI:58937"/>
    </ligand>
</feature>
<feature type="binding site" evidence="1">
    <location>
        <position position="173"/>
    </location>
    <ligand>
        <name>Mg(2+)</name>
        <dbReference type="ChEBI" id="CHEBI:18420"/>
    </ligand>
</feature>
<feature type="binding site" evidence="1">
    <location>
        <position position="173"/>
    </location>
    <ligand>
        <name>thiamine diphosphate</name>
        <dbReference type="ChEBI" id="CHEBI:58937"/>
    </ligand>
</feature>
<feature type="binding site" evidence="1">
    <location>
        <position position="284"/>
    </location>
    <ligand>
        <name>thiamine diphosphate</name>
        <dbReference type="ChEBI" id="CHEBI:58937"/>
    </ligand>
</feature>
<feature type="binding site" evidence="1">
    <location>
        <position position="367"/>
    </location>
    <ligand>
        <name>thiamine diphosphate</name>
        <dbReference type="ChEBI" id="CHEBI:58937"/>
    </ligand>
</feature>